<evidence type="ECO:0000255" key="1"/>
<evidence type="ECO:0000305" key="2"/>
<feature type="chain" id="PRO_0000213273" description="Protein SprT">
    <location>
        <begin position="1"/>
        <end position="165"/>
    </location>
</feature>
<feature type="domain" description="SprT-like">
    <location>
        <begin position="10"/>
        <end position="158"/>
    </location>
</feature>
<feature type="active site" evidence="1">
    <location>
        <position position="70"/>
    </location>
</feature>
<feature type="binding site" evidence="1">
    <location>
        <position position="69"/>
    </location>
    <ligand>
        <name>Zn(2+)</name>
        <dbReference type="ChEBI" id="CHEBI:29105"/>
    </ligand>
</feature>
<feature type="binding site" evidence="1">
    <location>
        <position position="73"/>
    </location>
    <ligand>
        <name>Zn(2+)</name>
        <dbReference type="ChEBI" id="CHEBI:29105"/>
    </ligand>
</feature>
<accession>Q9I4E9</accession>
<reference key="1">
    <citation type="journal article" date="2000" name="Nature">
        <title>Complete genome sequence of Pseudomonas aeruginosa PAO1, an opportunistic pathogen.</title>
        <authorList>
            <person name="Stover C.K."/>
            <person name="Pham X.-Q.T."/>
            <person name="Erwin A.L."/>
            <person name="Mizoguchi S.D."/>
            <person name="Warrener P."/>
            <person name="Hickey M.J."/>
            <person name="Brinkman F.S.L."/>
            <person name="Hufnagle W.O."/>
            <person name="Kowalik D.J."/>
            <person name="Lagrou M."/>
            <person name="Garber R.L."/>
            <person name="Goltry L."/>
            <person name="Tolentino E."/>
            <person name="Westbrock-Wadman S."/>
            <person name="Yuan Y."/>
            <person name="Brody L.L."/>
            <person name="Coulter S.N."/>
            <person name="Folger K.R."/>
            <person name="Kas A."/>
            <person name="Larbig K."/>
            <person name="Lim R.M."/>
            <person name="Smith K.A."/>
            <person name="Spencer D.H."/>
            <person name="Wong G.K.-S."/>
            <person name="Wu Z."/>
            <person name="Paulsen I.T."/>
            <person name="Reizer J."/>
            <person name="Saier M.H. Jr."/>
            <person name="Hancock R.E.W."/>
            <person name="Lory S."/>
            <person name="Olson M.V."/>
        </authorList>
    </citation>
    <scope>NUCLEOTIDE SEQUENCE [LARGE SCALE GENOMIC DNA]</scope>
    <source>
        <strain>ATCC 15692 / DSM 22644 / CIP 104116 / JCM 14847 / LMG 12228 / 1C / PRS 101 / PAO1</strain>
    </source>
</reference>
<organism>
    <name type="scientific">Pseudomonas aeruginosa (strain ATCC 15692 / DSM 22644 / CIP 104116 / JCM 14847 / LMG 12228 / 1C / PRS 101 / PAO1)</name>
    <dbReference type="NCBI Taxonomy" id="208964"/>
    <lineage>
        <taxon>Bacteria</taxon>
        <taxon>Pseudomonadati</taxon>
        <taxon>Pseudomonadota</taxon>
        <taxon>Gammaproteobacteria</taxon>
        <taxon>Pseudomonadales</taxon>
        <taxon>Pseudomonadaceae</taxon>
        <taxon>Pseudomonas</taxon>
    </lineage>
</organism>
<name>SPRT_PSEAE</name>
<gene>
    <name type="primary">sprT</name>
    <name type="ordered locus">PA1189</name>
</gene>
<sequence length="165" mass="19723">MPEHLNARVEACYRQAEHFFQRSFPRPTVSFRLRGQKAGVAHLDENLLRFNPQLYRENREHFLEQTVAHEVAHLIAHQLFGPRIRPHGEEWQLIMRGIYGLPPDRCHTYAVKRRATTRYLYRCHCPEHNDFPFSPQRHTLVAKGRRYYCRRCKATLVFTGEVLRE</sequence>
<protein>
    <recommendedName>
        <fullName>Protein SprT</fullName>
    </recommendedName>
</protein>
<comment type="cofactor">
    <cofactor evidence="2">
        <name>Zn(2+)</name>
        <dbReference type="ChEBI" id="CHEBI:29105"/>
    </cofactor>
    <text evidence="2">Binds 1 zinc ion.</text>
</comment>
<comment type="subcellular location">
    <subcellularLocation>
        <location evidence="2">Cytoplasm</location>
    </subcellularLocation>
</comment>
<comment type="similarity">
    <text evidence="2">Belongs to the SprT family.</text>
</comment>
<keyword id="KW-0963">Cytoplasm</keyword>
<keyword id="KW-0479">Metal-binding</keyword>
<keyword id="KW-1185">Reference proteome</keyword>
<keyword id="KW-0862">Zinc</keyword>
<proteinExistence type="inferred from homology"/>
<dbReference type="EMBL" id="AE004091">
    <property type="protein sequence ID" value="AAG04578.1"/>
    <property type="molecule type" value="Genomic_DNA"/>
</dbReference>
<dbReference type="PIR" id="H83496">
    <property type="entry name" value="H83496"/>
</dbReference>
<dbReference type="RefSeq" id="NP_249880.1">
    <property type="nucleotide sequence ID" value="NC_002516.2"/>
</dbReference>
<dbReference type="RefSeq" id="WP_003082453.1">
    <property type="nucleotide sequence ID" value="NZ_QZGE01000006.1"/>
</dbReference>
<dbReference type="SMR" id="Q9I4E9"/>
<dbReference type="FunCoup" id="Q9I4E9">
    <property type="interactions" value="36"/>
</dbReference>
<dbReference type="STRING" id="208964.PA1189"/>
<dbReference type="PaxDb" id="208964-PA1189"/>
<dbReference type="DNASU" id="880448"/>
<dbReference type="GeneID" id="880448"/>
<dbReference type="KEGG" id="pae:PA1189"/>
<dbReference type="PATRIC" id="fig|208964.12.peg.1235"/>
<dbReference type="PseudoCAP" id="PA1189"/>
<dbReference type="HOGENOM" id="CLU_113336_0_1_6"/>
<dbReference type="InParanoid" id="Q9I4E9"/>
<dbReference type="OrthoDB" id="267364at2"/>
<dbReference type="PhylomeDB" id="Q9I4E9"/>
<dbReference type="BioCyc" id="PAER208964:G1FZ6-1214-MONOMER"/>
<dbReference type="Proteomes" id="UP000002438">
    <property type="component" value="Chromosome"/>
</dbReference>
<dbReference type="GO" id="GO:0005737">
    <property type="term" value="C:cytoplasm"/>
    <property type="evidence" value="ECO:0007669"/>
    <property type="project" value="UniProtKB-SubCell"/>
</dbReference>
<dbReference type="GO" id="GO:0008270">
    <property type="term" value="F:zinc ion binding"/>
    <property type="evidence" value="ECO:0007669"/>
    <property type="project" value="UniProtKB-UniRule"/>
</dbReference>
<dbReference type="GO" id="GO:0006950">
    <property type="term" value="P:response to stress"/>
    <property type="evidence" value="ECO:0007669"/>
    <property type="project" value="UniProtKB-ARBA"/>
</dbReference>
<dbReference type="HAMAP" id="MF_00746">
    <property type="entry name" value="SprT"/>
    <property type="match status" value="1"/>
</dbReference>
<dbReference type="InterPro" id="IPR006640">
    <property type="entry name" value="SprT-like_domain"/>
</dbReference>
<dbReference type="InterPro" id="IPR035240">
    <property type="entry name" value="SprT_Zn_ribbon"/>
</dbReference>
<dbReference type="InterPro" id="IPR023483">
    <property type="entry name" value="Uncharacterised_SprT"/>
</dbReference>
<dbReference type="NCBIfam" id="NF003421">
    <property type="entry name" value="PRK04860.1"/>
    <property type="match status" value="1"/>
</dbReference>
<dbReference type="PANTHER" id="PTHR38773">
    <property type="entry name" value="PROTEIN SPRT"/>
    <property type="match status" value="1"/>
</dbReference>
<dbReference type="PANTHER" id="PTHR38773:SF1">
    <property type="entry name" value="PROTEIN SPRT"/>
    <property type="match status" value="1"/>
</dbReference>
<dbReference type="Pfam" id="PF10263">
    <property type="entry name" value="SprT-like"/>
    <property type="match status" value="1"/>
</dbReference>
<dbReference type="Pfam" id="PF17283">
    <property type="entry name" value="Zn_ribbon_SprT"/>
    <property type="match status" value="1"/>
</dbReference>
<dbReference type="SMART" id="SM00731">
    <property type="entry name" value="SprT"/>
    <property type="match status" value="1"/>
</dbReference>
<dbReference type="PROSITE" id="PS00142">
    <property type="entry name" value="ZINC_PROTEASE"/>
    <property type="match status" value="1"/>
</dbReference>